<protein>
    <recommendedName>
        <fullName evidence="1">Imidazole glycerol phosphate synthase subunit HisF</fullName>
        <ecNumber evidence="1">4.3.2.10</ecNumber>
    </recommendedName>
    <alternativeName>
        <fullName evidence="1">IGP synthase cyclase subunit</fullName>
    </alternativeName>
    <alternativeName>
        <fullName evidence="1">IGP synthase subunit HisF</fullName>
    </alternativeName>
    <alternativeName>
        <fullName evidence="1">ImGP synthase subunit HisF</fullName>
        <shortName evidence="1">IGPS subunit HisF</shortName>
    </alternativeName>
</protein>
<organism>
    <name type="scientific">Campylobacter jejuni (strain RM1221)</name>
    <dbReference type="NCBI Taxonomy" id="195099"/>
    <lineage>
        <taxon>Bacteria</taxon>
        <taxon>Pseudomonadati</taxon>
        <taxon>Campylobacterota</taxon>
        <taxon>Epsilonproteobacteria</taxon>
        <taxon>Campylobacterales</taxon>
        <taxon>Campylobacteraceae</taxon>
        <taxon>Campylobacter</taxon>
    </lineage>
</organism>
<name>HIS6_CAMJR</name>
<sequence length="255" mass="28059">MLTKRIIACLDVKDGRVVKGTQFKNHKDMGDIIELARYYSQNGIDELVFYDIAASARKERISREWVSEVAKNINISFCVAGGIKSEEDAAELLANGADKISINSPALNDPSLITRLAKSFGVQCVVVGIDSFKDENGNLKVFQYTGDEKTSKHSGKSTLEWVKKVQDLGAGEIVLNMMNQDGVKNGYDLEQLEAVYKICKVPLIASGGAGKMEHFLEAFKLGIDGALAASVFHQKLIDIKELKIYLKNQGLSIRI</sequence>
<gene>
    <name evidence="1" type="primary">hisF</name>
    <name type="ordered locus">CJE1775</name>
</gene>
<dbReference type="EC" id="4.3.2.10" evidence="1"/>
<dbReference type="EMBL" id="CP000025">
    <property type="protein sequence ID" value="AAW36199.1"/>
    <property type="molecule type" value="Genomic_DNA"/>
</dbReference>
<dbReference type="RefSeq" id="WP_002851492.1">
    <property type="nucleotide sequence ID" value="NC_003912.7"/>
</dbReference>
<dbReference type="SMR" id="Q5HSI8"/>
<dbReference type="KEGG" id="cjr:CJE1775"/>
<dbReference type="HOGENOM" id="CLU_048577_4_0_7"/>
<dbReference type="UniPathway" id="UPA00031">
    <property type="reaction ID" value="UER00010"/>
</dbReference>
<dbReference type="GO" id="GO:0005737">
    <property type="term" value="C:cytoplasm"/>
    <property type="evidence" value="ECO:0007669"/>
    <property type="project" value="UniProtKB-SubCell"/>
</dbReference>
<dbReference type="GO" id="GO:0000107">
    <property type="term" value="F:imidazoleglycerol-phosphate synthase activity"/>
    <property type="evidence" value="ECO:0007669"/>
    <property type="project" value="UniProtKB-UniRule"/>
</dbReference>
<dbReference type="GO" id="GO:0016829">
    <property type="term" value="F:lyase activity"/>
    <property type="evidence" value="ECO:0007669"/>
    <property type="project" value="UniProtKB-KW"/>
</dbReference>
<dbReference type="GO" id="GO:0000105">
    <property type="term" value="P:L-histidine biosynthetic process"/>
    <property type="evidence" value="ECO:0007669"/>
    <property type="project" value="UniProtKB-UniRule"/>
</dbReference>
<dbReference type="CDD" id="cd04731">
    <property type="entry name" value="HisF"/>
    <property type="match status" value="1"/>
</dbReference>
<dbReference type="FunFam" id="3.20.20.70:FF:000006">
    <property type="entry name" value="Imidazole glycerol phosphate synthase subunit HisF"/>
    <property type="match status" value="1"/>
</dbReference>
<dbReference type="Gene3D" id="3.20.20.70">
    <property type="entry name" value="Aldolase class I"/>
    <property type="match status" value="1"/>
</dbReference>
<dbReference type="HAMAP" id="MF_01013">
    <property type="entry name" value="HisF"/>
    <property type="match status" value="1"/>
</dbReference>
<dbReference type="InterPro" id="IPR013785">
    <property type="entry name" value="Aldolase_TIM"/>
</dbReference>
<dbReference type="InterPro" id="IPR006062">
    <property type="entry name" value="His_biosynth"/>
</dbReference>
<dbReference type="InterPro" id="IPR004651">
    <property type="entry name" value="HisF"/>
</dbReference>
<dbReference type="InterPro" id="IPR050064">
    <property type="entry name" value="IGPS_HisA/HisF"/>
</dbReference>
<dbReference type="InterPro" id="IPR011060">
    <property type="entry name" value="RibuloseP-bd_barrel"/>
</dbReference>
<dbReference type="NCBIfam" id="TIGR00735">
    <property type="entry name" value="hisF"/>
    <property type="match status" value="1"/>
</dbReference>
<dbReference type="PANTHER" id="PTHR21235:SF2">
    <property type="entry name" value="IMIDAZOLE GLYCEROL PHOSPHATE SYNTHASE HISHF"/>
    <property type="match status" value="1"/>
</dbReference>
<dbReference type="PANTHER" id="PTHR21235">
    <property type="entry name" value="IMIDAZOLE GLYCEROL PHOSPHATE SYNTHASE SUBUNIT HISF/H IGP SYNTHASE SUBUNIT HISF/H"/>
    <property type="match status" value="1"/>
</dbReference>
<dbReference type="Pfam" id="PF00977">
    <property type="entry name" value="His_biosynth"/>
    <property type="match status" value="1"/>
</dbReference>
<dbReference type="SUPFAM" id="SSF51366">
    <property type="entry name" value="Ribulose-phoshate binding barrel"/>
    <property type="match status" value="1"/>
</dbReference>
<feature type="chain" id="PRO_0000142140" description="Imidazole glycerol phosphate synthase subunit HisF">
    <location>
        <begin position="1"/>
        <end position="255"/>
    </location>
</feature>
<feature type="active site" evidence="1">
    <location>
        <position position="11"/>
    </location>
</feature>
<feature type="active site" evidence="1">
    <location>
        <position position="130"/>
    </location>
</feature>
<proteinExistence type="inferred from homology"/>
<accession>Q5HSI8</accession>
<evidence type="ECO:0000255" key="1">
    <source>
        <dbReference type="HAMAP-Rule" id="MF_01013"/>
    </source>
</evidence>
<keyword id="KW-0028">Amino-acid biosynthesis</keyword>
<keyword id="KW-0963">Cytoplasm</keyword>
<keyword id="KW-0368">Histidine biosynthesis</keyword>
<keyword id="KW-0456">Lyase</keyword>
<reference key="1">
    <citation type="journal article" date="2005" name="PLoS Biol.">
        <title>Major structural differences and novel potential virulence mechanisms from the genomes of multiple Campylobacter species.</title>
        <authorList>
            <person name="Fouts D.E."/>
            <person name="Mongodin E.F."/>
            <person name="Mandrell R.E."/>
            <person name="Miller W.G."/>
            <person name="Rasko D.A."/>
            <person name="Ravel J."/>
            <person name="Brinkac L.M."/>
            <person name="DeBoy R.T."/>
            <person name="Parker C.T."/>
            <person name="Daugherty S.C."/>
            <person name="Dodson R.J."/>
            <person name="Durkin A.S."/>
            <person name="Madupu R."/>
            <person name="Sullivan S.A."/>
            <person name="Shetty J.U."/>
            <person name="Ayodeji M.A."/>
            <person name="Shvartsbeyn A."/>
            <person name="Schatz M.C."/>
            <person name="Badger J.H."/>
            <person name="Fraser C.M."/>
            <person name="Nelson K.E."/>
        </authorList>
    </citation>
    <scope>NUCLEOTIDE SEQUENCE [LARGE SCALE GENOMIC DNA]</scope>
    <source>
        <strain>RM1221</strain>
    </source>
</reference>
<comment type="function">
    <text evidence="1">IGPS catalyzes the conversion of PRFAR and glutamine to IGP, AICAR and glutamate. The HisF subunit catalyzes the cyclization activity that produces IGP and AICAR from PRFAR using the ammonia provided by the HisH subunit.</text>
</comment>
<comment type="catalytic activity">
    <reaction evidence="1">
        <text>5-[(5-phospho-1-deoxy-D-ribulos-1-ylimino)methylamino]-1-(5-phospho-beta-D-ribosyl)imidazole-4-carboxamide + L-glutamine = D-erythro-1-(imidazol-4-yl)glycerol 3-phosphate + 5-amino-1-(5-phospho-beta-D-ribosyl)imidazole-4-carboxamide + L-glutamate + H(+)</text>
        <dbReference type="Rhea" id="RHEA:24793"/>
        <dbReference type="ChEBI" id="CHEBI:15378"/>
        <dbReference type="ChEBI" id="CHEBI:29985"/>
        <dbReference type="ChEBI" id="CHEBI:58278"/>
        <dbReference type="ChEBI" id="CHEBI:58359"/>
        <dbReference type="ChEBI" id="CHEBI:58475"/>
        <dbReference type="ChEBI" id="CHEBI:58525"/>
        <dbReference type="EC" id="4.3.2.10"/>
    </reaction>
</comment>
<comment type="pathway">
    <text evidence="1">Amino-acid biosynthesis; L-histidine biosynthesis; L-histidine from 5-phospho-alpha-D-ribose 1-diphosphate: step 5/9.</text>
</comment>
<comment type="subunit">
    <text evidence="1">Heterodimer of HisH and HisF.</text>
</comment>
<comment type="subcellular location">
    <subcellularLocation>
        <location evidence="1">Cytoplasm</location>
    </subcellularLocation>
</comment>
<comment type="similarity">
    <text evidence="1">Belongs to the HisA/HisF family.</text>
</comment>